<evidence type="ECO:0000255" key="1">
    <source>
        <dbReference type="HAMAP-Rule" id="MF_01416"/>
    </source>
</evidence>
<feature type="chain" id="PRO_0000371050" description="ATP synthase subunit delta">
    <location>
        <begin position="1"/>
        <end position="181"/>
    </location>
</feature>
<reference key="1">
    <citation type="submission" date="2005-08" db="EMBL/GenBank/DDBJ databases">
        <title>Complete sequence of Pelodictyon luteolum DSM 273.</title>
        <authorList>
            <consortium name="US DOE Joint Genome Institute"/>
            <person name="Copeland A."/>
            <person name="Lucas S."/>
            <person name="Lapidus A."/>
            <person name="Barry K."/>
            <person name="Detter J.C."/>
            <person name="Glavina T."/>
            <person name="Hammon N."/>
            <person name="Israni S."/>
            <person name="Pitluck S."/>
            <person name="Bryant D."/>
            <person name="Schmutz J."/>
            <person name="Larimer F."/>
            <person name="Land M."/>
            <person name="Kyrpides N."/>
            <person name="Ivanova N."/>
            <person name="Richardson P."/>
        </authorList>
    </citation>
    <scope>NUCLEOTIDE SEQUENCE [LARGE SCALE GENOMIC DNA]</scope>
    <source>
        <strain>DSM 273 / BCRC 81028 / 2530</strain>
    </source>
</reference>
<comment type="function">
    <text evidence="1">F(1)F(0) ATP synthase produces ATP from ADP in the presence of a proton or sodium gradient. F-type ATPases consist of two structural domains, F(1) containing the extramembraneous catalytic core and F(0) containing the membrane proton channel, linked together by a central stalk and a peripheral stalk. During catalysis, ATP synthesis in the catalytic domain of F(1) is coupled via a rotary mechanism of the central stalk subunits to proton translocation.</text>
</comment>
<comment type="function">
    <text evidence="1">This protein is part of the stalk that links CF(0) to CF(1). It either transmits conformational changes from CF(0) to CF(1) or is implicated in proton conduction.</text>
</comment>
<comment type="subunit">
    <text evidence="1">F-type ATPases have 2 components, F(1) - the catalytic core - and F(0) - the membrane proton channel. F(1) has five subunits: alpha(3), beta(3), gamma(1), delta(1), epsilon(1). F(0) has three main subunits: a(1), b(2) and c(10-14). The alpha and beta chains form an alternating ring which encloses part of the gamma chain. F(1) is attached to F(0) by a central stalk formed by the gamma and epsilon chains, while a peripheral stalk is formed by the delta and b chains.</text>
</comment>
<comment type="subcellular location">
    <subcellularLocation>
        <location evidence="1">Cell inner membrane</location>
        <topology evidence="1">Peripheral membrane protein</topology>
    </subcellularLocation>
</comment>
<comment type="similarity">
    <text evidence="1">Belongs to the ATPase delta chain family.</text>
</comment>
<dbReference type="EMBL" id="CP000096">
    <property type="protein sequence ID" value="ABB24937.1"/>
    <property type="molecule type" value="Genomic_DNA"/>
</dbReference>
<dbReference type="RefSeq" id="WP_011358807.1">
    <property type="nucleotide sequence ID" value="NC_007512.1"/>
</dbReference>
<dbReference type="SMR" id="Q3B144"/>
<dbReference type="STRING" id="319225.Plut_2095"/>
<dbReference type="KEGG" id="plt:Plut_2095"/>
<dbReference type="eggNOG" id="COG0712">
    <property type="taxonomic scope" value="Bacteria"/>
</dbReference>
<dbReference type="HOGENOM" id="CLU_085114_4_0_10"/>
<dbReference type="OrthoDB" id="9802471at2"/>
<dbReference type="Proteomes" id="UP000002709">
    <property type="component" value="Chromosome"/>
</dbReference>
<dbReference type="GO" id="GO:0005886">
    <property type="term" value="C:plasma membrane"/>
    <property type="evidence" value="ECO:0007669"/>
    <property type="project" value="UniProtKB-SubCell"/>
</dbReference>
<dbReference type="GO" id="GO:0045259">
    <property type="term" value="C:proton-transporting ATP synthase complex"/>
    <property type="evidence" value="ECO:0007669"/>
    <property type="project" value="UniProtKB-KW"/>
</dbReference>
<dbReference type="GO" id="GO:0046933">
    <property type="term" value="F:proton-transporting ATP synthase activity, rotational mechanism"/>
    <property type="evidence" value="ECO:0007669"/>
    <property type="project" value="UniProtKB-UniRule"/>
</dbReference>
<dbReference type="Gene3D" id="1.10.520.20">
    <property type="entry name" value="N-terminal domain of the delta subunit of the F1F0-ATP synthase"/>
    <property type="match status" value="1"/>
</dbReference>
<dbReference type="HAMAP" id="MF_01416">
    <property type="entry name" value="ATP_synth_delta_bact"/>
    <property type="match status" value="1"/>
</dbReference>
<dbReference type="InterPro" id="IPR026015">
    <property type="entry name" value="ATP_synth_OSCP/delta_N_sf"/>
</dbReference>
<dbReference type="InterPro" id="IPR000711">
    <property type="entry name" value="ATPase_OSCP/dsu"/>
</dbReference>
<dbReference type="NCBIfam" id="TIGR01145">
    <property type="entry name" value="ATP_synt_delta"/>
    <property type="match status" value="1"/>
</dbReference>
<dbReference type="PANTHER" id="PTHR11910">
    <property type="entry name" value="ATP SYNTHASE DELTA CHAIN"/>
    <property type="match status" value="1"/>
</dbReference>
<dbReference type="Pfam" id="PF00213">
    <property type="entry name" value="OSCP"/>
    <property type="match status" value="1"/>
</dbReference>
<dbReference type="PRINTS" id="PR00125">
    <property type="entry name" value="ATPASEDELTA"/>
</dbReference>
<dbReference type="SUPFAM" id="SSF47928">
    <property type="entry name" value="N-terminal domain of the delta subunit of the F1F0-ATP synthase"/>
    <property type="match status" value="1"/>
</dbReference>
<sequence>MSSVIASRRYAYALLSAADEGGFLDDVTAEMEMIGETLAGSRDLVRVLASPLINGDRKTHILEEIFRGRVGERMMRFLSLIARKKRAGILRGIASEFKVLLDEKNGVVNADVTSATELSGEQAKELVNGLAAYTGKHVRARMTLDPEMIGGVSVQIGDTILDGSIRHQLQVLRRTLSVEEA</sequence>
<keyword id="KW-0066">ATP synthesis</keyword>
<keyword id="KW-0997">Cell inner membrane</keyword>
<keyword id="KW-1003">Cell membrane</keyword>
<keyword id="KW-0139">CF(1)</keyword>
<keyword id="KW-0375">Hydrogen ion transport</keyword>
<keyword id="KW-0406">Ion transport</keyword>
<keyword id="KW-0472">Membrane</keyword>
<keyword id="KW-1185">Reference proteome</keyword>
<keyword id="KW-0813">Transport</keyword>
<proteinExistence type="inferred from homology"/>
<name>ATPD_CHLL3</name>
<accession>Q3B144</accession>
<protein>
    <recommendedName>
        <fullName evidence="1">ATP synthase subunit delta</fullName>
    </recommendedName>
    <alternativeName>
        <fullName evidence="1">ATP synthase F(1) sector subunit delta</fullName>
    </alternativeName>
    <alternativeName>
        <fullName evidence="1">F-type ATPase subunit delta</fullName>
        <shortName evidence="1">F-ATPase subunit delta</shortName>
    </alternativeName>
</protein>
<organism>
    <name type="scientific">Chlorobium luteolum (strain DSM 273 / BCRC 81028 / 2530)</name>
    <name type="common">Pelodictyon luteolum</name>
    <dbReference type="NCBI Taxonomy" id="319225"/>
    <lineage>
        <taxon>Bacteria</taxon>
        <taxon>Pseudomonadati</taxon>
        <taxon>Chlorobiota</taxon>
        <taxon>Chlorobiia</taxon>
        <taxon>Chlorobiales</taxon>
        <taxon>Chlorobiaceae</taxon>
        <taxon>Chlorobium/Pelodictyon group</taxon>
        <taxon>Pelodictyon</taxon>
    </lineage>
</organism>
<gene>
    <name evidence="1" type="primary">atpH</name>
    <name type="ordered locus">Plut_2095</name>
</gene>